<comment type="function">
    <text evidence="2 3 4 5">Involved in the biosynthesis of the antifungal antibiotic pyrrolnitrin (PRN). Catalyzes the oxidation of the amino group of aminopyrrolnitrin (APRN) to a nitro group to form PRN. It has high substrate specificity toward physiological substrate aminopyrrolnitrin, p-aminobenzylamine (pABA), p-aminobenzyl alcohol, and p-aminophenyl alanine.</text>
</comment>
<comment type="catalytic activity">
    <reaction evidence="2">
        <text>aminopyrrolnitrin + NADPH + 2 O2 + H(+) = pyrrolnitrin + NADP(+) + 2 H2O</text>
        <dbReference type="Rhea" id="RHEA:46136"/>
        <dbReference type="ChEBI" id="CHEBI:15377"/>
        <dbReference type="ChEBI" id="CHEBI:15378"/>
        <dbReference type="ChEBI" id="CHEBI:15379"/>
        <dbReference type="ChEBI" id="CHEBI:32079"/>
        <dbReference type="ChEBI" id="CHEBI:57783"/>
        <dbReference type="ChEBI" id="CHEBI:58349"/>
        <dbReference type="ChEBI" id="CHEBI:85786"/>
    </reaction>
</comment>
<comment type="cofactor">
    <cofactor evidence="1 2">
        <name>[2Fe-2S] cluster</name>
        <dbReference type="ChEBI" id="CHEBI:190135"/>
    </cofactor>
    <text evidence="1 2">Binds 1 [2Fe-2S] cluster per subunit.</text>
</comment>
<comment type="cofactor">
    <cofactor evidence="2">
        <name>Fe cation</name>
        <dbReference type="ChEBI" id="CHEBI:24875"/>
    </cofactor>
    <text evidence="2">Binds 1 Fe cation per subunit.</text>
</comment>
<comment type="cofactor">
    <cofactor evidence="2">
        <name>FMN</name>
        <dbReference type="ChEBI" id="CHEBI:58210"/>
    </cofactor>
</comment>
<comment type="biophysicochemical properties">
    <kinetics>
        <KM evidence="2 3">35.5 uM for p-aminophenyl alanine (at pH 7.8 and 30 degrees Celsius)</KM>
        <KM evidence="2 3">42.2 uM for p-aminobenzyl alcohol (at pH 7.8 and 30 degrees Celsius)</KM>
        <KM evidence="2 3">191 uM for APRN (at pH 7.8 and 30 degrees Celsius)</KM>
        <KM evidence="2 3">379 uM for pABA (at pH 7.8 and 30 degrees Celsius)</KM>
        <text>kcat is 6.8 min(-1) for aminopyrrolnitrin, 6.5 min(-1) for p-aminobenzyl amine, 1.8 min(-1) for p-aminobenzyl alcohol and 1.2 min(-1) for p-aminophenyl alanine.</text>
    </kinetics>
</comment>
<comment type="pathway">
    <text>Antibiotic biosynthesis.</text>
</comment>
<comment type="subunit">
    <text evidence="2">Homodimer.</text>
</comment>
<comment type="disruption phenotype">
    <text evidence="4 5">Cells lacking this gene lose the ability to produce pyrrolnitrin and accumulate APRN.</text>
</comment>
<reference key="1">
    <citation type="journal article" date="1997" name="Appl. Environ. Microbiol.">
        <title>Four genes from Pseudomonas fluorescens that encode the biosynthesis of pyrrolnitrin.</title>
        <authorList>
            <person name="Hammer P.E."/>
            <person name="Hill D.S."/>
            <person name="Lam S.T."/>
            <person name="Van Pee K.H."/>
            <person name="Ligon J.M."/>
        </authorList>
    </citation>
    <scope>NUCLEOTIDE SEQUENCE [GENOMIC DNA]</scope>
    <scope>FUNCTION</scope>
    <scope>DISRUPTION PHENOTYPE</scope>
    <scope>NOMENCLATURE</scope>
    <source>
        <strain>Bl915</strain>
    </source>
</reference>
<reference key="2">
    <citation type="journal article" date="1998" name="J. Bacteriol.">
        <title>Functions encoded by pyrrolnitrin biosynthetic genes from Pseudomonas fluorescens.</title>
        <authorList>
            <person name="Kirner S."/>
            <person name="Hammer P.E."/>
            <person name="Hill D.S."/>
            <person name="Altmann A."/>
            <person name="Fischer I."/>
            <person name="Weislo L.J."/>
            <person name="Lanahan M."/>
            <person name="van Pee K.H."/>
            <person name="Ligon J.M."/>
        </authorList>
    </citation>
    <scope>NUCLEOTIDE SEQUENCE [GENOMIC DNA]</scope>
    <scope>FUNCTION</scope>
    <scope>DISRUPTION PHENOTYPE</scope>
    <source>
        <strain>Bl915</strain>
    </source>
</reference>
<reference key="3">
    <citation type="journal article" date="2005" name="J. Biol. Chem.">
        <title>Reconstitution and characterization of aminopyrrolnitrin oxygenase, a Rieske N-oxygenase that catalyzes unusual arylamine oxidation.</title>
        <authorList>
            <person name="Lee J."/>
            <person name="Simurdiak M."/>
            <person name="Zhao H."/>
        </authorList>
    </citation>
    <scope>FUNCTION</scope>
    <scope>CATALYTIC ACTIVITY</scope>
    <scope>BIOPHYSICOCHEMICAL PROPERTIES</scope>
    <scope>MUTAGENESIS OF CYS-69; CYS-88; ASP-183 AND ASP-323</scope>
    <scope>COFACTOR</scope>
    <scope>SUBSTRATE SPECIFICITY</scope>
    <scope>SUBUNIT</scope>
</reference>
<reference key="4">
    <citation type="journal article" date="2006" name="Angew. Chem. Int. Ed.">
        <title>Mechanistic studies on the conversion of arylamines into arylnitro compounds by aminopyrrolnitrin oxygenase: identification of intermediates and kinetic studies.</title>
        <authorList>
            <person name="Lee J."/>
            <person name="Zhao H."/>
        </authorList>
    </citation>
    <scope>FUNCTION</scope>
    <scope>MUTAGENESIS OF TRP-209; ASP-269 AND PHE-312</scope>
    <scope>BIOPHYSICOCHEMICAL PROPERTIES</scope>
    <scope>SUBSTRATE SPECIFICITY</scope>
    <scope>REACTION MECHANISM</scope>
</reference>
<gene>
    <name type="primary">prnD</name>
</gene>
<evidence type="ECO:0000255" key="1">
    <source>
        <dbReference type="PROSITE-ProRule" id="PRU00628"/>
    </source>
</evidence>
<evidence type="ECO:0000269" key="2">
    <source>
    </source>
</evidence>
<evidence type="ECO:0000269" key="3">
    <source>
    </source>
</evidence>
<evidence type="ECO:0000269" key="4">
    <source>
    </source>
</evidence>
<evidence type="ECO:0000269" key="5">
    <source>
    </source>
</evidence>
<evidence type="ECO:0000305" key="6"/>
<sequence>MNDIQLDQASVKKRPSGAYDATTRLAASWYVAMRSNELKDKPTELTLFGRPCVAWRGATGRAVVMDRHCSHLGANLADGRIKDGCIQCPFHHWRYDEQGQCVHIPGHNQAVRQLEPVPRGARQPTLVTAERYGYVWVWYGSPLPLHPLPEISAADVDNGDFMHLHFAFETTTAVLRIVENFYDAQHATPVHALPISAFELKLFDDWRQWPEVESLALAGAWFGAGIDFTVDRYFGPLGMLSRALGLNMSQMNLHFDGYPGGCVMTVALDGDVKYKLLQCVTPVSEGKNVMHMLISIKKVGGILRRATDFVLFGLQTRQAAGYDVKIWNGMKPDGGGAYSKYDKLVLKYRAFYRGWVDRVASER</sequence>
<keyword id="KW-0001">2Fe-2S</keyword>
<keyword id="KW-0045">Antibiotic biosynthesis</keyword>
<keyword id="KW-0285">Flavoprotein</keyword>
<keyword id="KW-0288">FMN</keyword>
<keyword id="KW-0408">Iron</keyword>
<keyword id="KW-0411">Iron-sulfur</keyword>
<keyword id="KW-0479">Metal-binding</keyword>
<keyword id="KW-0521">NADP</keyword>
<keyword id="KW-0560">Oxidoreductase</keyword>
<accession>P95483</accession>
<feature type="chain" id="PRO_0000422333" description="Aminopyrrolnitrin oxygenase PrnD">
    <location>
        <begin position="1"/>
        <end position="363"/>
    </location>
</feature>
<feature type="domain" description="Rieske" evidence="1">
    <location>
        <begin position="29"/>
        <end position="137"/>
    </location>
</feature>
<feature type="binding site" evidence="6">
    <location>
        <position position="69"/>
    </location>
    <ligand>
        <name>[2Fe-2S] cluster</name>
        <dbReference type="ChEBI" id="CHEBI:190135"/>
    </ligand>
</feature>
<feature type="binding site" evidence="1">
    <location>
        <position position="71"/>
    </location>
    <ligand>
        <name>[2Fe-2S] cluster</name>
        <dbReference type="ChEBI" id="CHEBI:190135"/>
    </ligand>
</feature>
<feature type="binding site" evidence="6">
    <location>
        <position position="88"/>
    </location>
    <ligand>
        <name>[2Fe-2S] cluster</name>
        <dbReference type="ChEBI" id="CHEBI:190135"/>
    </ligand>
</feature>
<feature type="binding site" evidence="1">
    <location>
        <position position="91"/>
    </location>
    <ligand>
        <name>[2Fe-2S] cluster</name>
        <dbReference type="ChEBI" id="CHEBI:190135"/>
    </ligand>
</feature>
<feature type="site" description="Important for catalysis">
    <location>
        <position position="183"/>
    </location>
</feature>
<feature type="site" description="Important for catalysis">
    <location>
        <position position="323"/>
    </location>
</feature>
<feature type="mutagenesis site" description="Loss of oxygenase activity." evidence="2">
    <original>C</original>
    <variation>A</variation>
    <location>
        <position position="69"/>
    </location>
</feature>
<feature type="mutagenesis site" description="Loss of oxygenase activity." evidence="2">
    <original>C</original>
    <variation>A</variation>
    <location>
        <position position="88"/>
    </location>
</feature>
<feature type="mutagenesis site" description="Significant decrease of oxygenase activity." evidence="2">
    <original>D</original>
    <variation>A</variation>
    <location>
        <position position="183"/>
    </location>
</feature>
<feature type="mutagenesis site" description="Unable to convert either the alternative substrate pABA or the interdiate 4-hydroxylaminobenzylamine (pHABA)." evidence="3">
    <original>W</original>
    <variation>A</variation>
    <location>
        <position position="209"/>
    </location>
</feature>
<feature type="mutagenesis site" description="Shows much higher activity toward the intermediate 4-hydroxylaminobenzylamine (pHABA) than pABA." evidence="3">
    <original>D</original>
    <variation>A</variation>
    <location>
        <position position="269"/>
    </location>
</feature>
<feature type="mutagenesis site" description="Unable to convert either the alternative substrate pABA or the interdiate 4-hydroxylaminobenzylamine (pHABA)." evidence="3">
    <original>F</original>
    <variation>V</variation>
    <location>
        <position position="312"/>
    </location>
</feature>
<feature type="mutagenesis site" description="Significant decrease of oxygenase." evidence="2">
    <original>D</original>
    <variation>A</variation>
    <location>
        <position position="323"/>
    </location>
</feature>
<proteinExistence type="evidence at protein level"/>
<name>PRND_PSEFL</name>
<protein>
    <recommendedName>
        <fullName>Aminopyrrolnitrin oxygenase PrnD</fullName>
        <ecNumber>1.14.13.-</ecNumber>
    </recommendedName>
    <alternativeName>
        <fullName>Arylamine oxygenase</fullName>
    </alternativeName>
</protein>
<organism>
    <name type="scientific">Pseudomonas fluorescens</name>
    <dbReference type="NCBI Taxonomy" id="294"/>
    <lineage>
        <taxon>Bacteria</taxon>
        <taxon>Pseudomonadati</taxon>
        <taxon>Pseudomonadota</taxon>
        <taxon>Gammaproteobacteria</taxon>
        <taxon>Pseudomonadales</taxon>
        <taxon>Pseudomonadaceae</taxon>
        <taxon>Pseudomonas</taxon>
    </lineage>
</organism>
<dbReference type="EC" id="1.14.13.-"/>
<dbReference type="EMBL" id="U74493">
    <property type="protein sequence ID" value="AAB97507.1"/>
    <property type="molecule type" value="Genomic_DNA"/>
</dbReference>
<dbReference type="SMR" id="P95483"/>
<dbReference type="KEGG" id="ag:AAB97507"/>
<dbReference type="GO" id="GO:0051537">
    <property type="term" value="F:2 iron, 2 sulfur cluster binding"/>
    <property type="evidence" value="ECO:0007669"/>
    <property type="project" value="UniProtKB-KW"/>
</dbReference>
<dbReference type="GO" id="GO:0046872">
    <property type="term" value="F:metal ion binding"/>
    <property type="evidence" value="ECO:0007669"/>
    <property type="project" value="UniProtKB-KW"/>
</dbReference>
<dbReference type="GO" id="GO:0016491">
    <property type="term" value="F:oxidoreductase activity"/>
    <property type="evidence" value="ECO:0007669"/>
    <property type="project" value="UniProtKB-KW"/>
</dbReference>
<dbReference type="GO" id="GO:0017000">
    <property type="term" value="P:antibiotic biosynthetic process"/>
    <property type="evidence" value="ECO:0007669"/>
    <property type="project" value="UniProtKB-KW"/>
</dbReference>
<dbReference type="GO" id="GO:0008203">
    <property type="term" value="P:cholesterol metabolic process"/>
    <property type="evidence" value="ECO:0007669"/>
    <property type="project" value="InterPro"/>
</dbReference>
<dbReference type="CDD" id="cd03537">
    <property type="entry name" value="Rieske_RO_Alpha_PrnD"/>
    <property type="match status" value="1"/>
</dbReference>
<dbReference type="Gene3D" id="3.90.380.10">
    <property type="entry name" value="Naphthalene 1,2-dioxygenase Alpha Subunit, Chain A, domain 1"/>
    <property type="match status" value="1"/>
</dbReference>
<dbReference type="Gene3D" id="2.102.10.10">
    <property type="entry name" value="Rieske [2Fe-2S] iron-sulphur domain"/>
    <property type="match status" value="1"/>
</dbReference>
<dbReference type="InterPro" id="IPR050584">
    <property type="entry name" value="Cholesterol_7-desaturase"/>
</dbReference>
<dbReference type="InterPro" id="IPR045605">
    <property type="entry name" value="KshA-like_C"/>
</dbReference>
<dbReference type="InterPro" id="IPR037338">
    <property type="entry name" value="PrnD_Rieske"/>
</dbReference>
<dbReference type="InterPro" id="IPR017941">
    <property type="entry name" value="Rieske_2Fe-2S"/>
</dbReference>
<dbReference type="InterPro" id="IPR036922">
    <property type="entry name" value="Rieske_2Fe-2S_sf"/>
</dbReference>
<dbReference type="PANTHER" id="PTHR21266:SF60">
    <property type="entry name" value="3-KETOSTEROID-9-ALPHA-MONOOXYGENASE, OXYGENASE COMPONENT"/>
    <property type="match status" value="1"/>
</dbReference>
<dbReference type="PANTHER" id="PTHR21266">
    <property type="entry name" value="IRON-SULFUR DOMAIN CONTAINING PROTEIN"/>
    <property type="match status" value="1"/>
</dbReference>
<dbReference type="Pfam" id="PF19298">
    <property type="entry name" value="KshA_C"/>
    <property type="match status" value="1"/>
</dbReference>
<dbReference type="Pfam" id="PF00355">
    <property type="entry name" value="Rieske"/>
    <property type="match status" value="1"/>
</dbReference>
<dbReference type="SUPFAM" id="SSF55961">
    <property type="entry name" value="Bet v1-like"/>
    <property type="match status" value="1"/>
</dbReference>
<dbReference type="SUPFAM" id="SSF50022">
    <property type="entry name" value="ISP domain"/>
    <property type="match status" value="1"/>
</dbReference>
<dbReference type="PROSITE" id="PS51296">
    <property type="entry name" value="RIESKE"/>
    <property type="match status" value="1"/>
</dbReference>